<feature type="chain" id="PRO_0000251376" description="Large ribosomal subunit protein uL18">
    <location>
        <begin position="1"/>
        <end position="118"/>
    </location>
</feature>
<feature type="region of interest" description="Disordered" evidence="2">
    <location>
        <begin position="1"/>
        <end position="24"/>
    </location>
</feature>
<feature type="compositionally biased region" description="Basic residues" evidence="2">
    <location>
        <begin position="10"/>
        <end position="20"/>
    </location>
</feature>
<dbReference type="EMBL" id="CP000114">
    <property type="protein sequence ID" value="ABA45012.1"/>
    <property type="molecule type" value="Genomic_DNA"/>
</dbReference>
<dbReference type="RefSeq" id="WP_001865622.1">
    <property type="nucleotide sequence ID" value="NC_007432.1"/>
</dbReference>
<dbReference type="SMR" id="Q3K3V3"/>
<dbReference type="GeneID" id="66885034"/>
<dbReference type="KEGG" id="sak:SAK_0107"/>
<dbReference type="HOGENOM" id="CLU_098841_0_1_9"/>
<dbReference type="GO" id="GO:0022625">
    <property type="term" value="C:cytosolic large ribosomal subunit"/>
    <property type="evidence" value="ECO:0007669"/>
    <property type="project" value="TreeGrafter"/>
</dbReference>
<dbReference type="GO" id="GO:0008097">
    <property type="term" value="F:5S rRNA binding"/>
    <property type="evidence" value="ECO:0007669"/>
    <property type="project" value="TreeGrafter"/>
</dbReference>
<dbReference type="GO" id="GO:0003735">
    <property type="term" value="F:structural constituent of ribosome"/>
    <property type="evidence" value="ECO:0007669"/>
    <property type="project" value="InterPro"/>
</dbReference>
<dbReference type="GO" id="GO:0006412">
    <property type="term" value="P:translation"/>
    <property type="evidence" value="ECO:0007669"/>
    <property type="project" value="UniProtKB-UniRule"/>
</dbReference>
<dbReference type="CDD" id="cd00432">
    <property type="entry name" value="Ribosomal_L18_L5e"/>
    <property type="match status" value="1"/>
</dbReference>
<dbReference type="FunFam" id="3.30.420.100:FF:000001">
    <property type="entry name" value="50S ribosomal protein L18"/>
    <property type="match status" value="1"/>
</dbReference>
<dbReference type="Gene3D" id="3.30.420.100">
    <property type="match status" value="1"/>
</dbReference>
<dbReference type="HAMAP" id="MF_01337_B">
    <property type="entry name" value="Ribosomal_uL18_B"/>
    <property type="match status" value="1"/>
</dbReference>
<dbReference type="InterPro" id="IPR004389">
    <property type="entry name" value="Ribosomal_uL18_bac-type"/>
</dbReference>
<dbReference type="InterPro" id="IPR005484">
    <property type="entry name" value="Ribosomal_uL18_bac/euk"/>
</dbReference>
<dbReference type="NCBIfam" id="TIGR00060">
    <property type="entry name" value="L18_bact"/>
    <property type="match status" value="1"/>
</dbReference>
<dbReference type="PANTHER" id="PTHR12899">
    <property type="entry name" value="39S RIBOSOMAL PROTEIN L18, MITOCHONDRIAL"/>
    <property type="match status" value="1"/>
</dbReference>
<dbReference type="PANTHER" id="PTHR12899:SF3">
    <property type="entry name" value="LARGE RIBOSOMAL SUBUNIT PROTEIN UL18M"/>
    <property type="match status" value="1"/>
</dbReference>
<dbReference type="Pfam" id="PF00861">
    <property type="entry name" value="Ribosomal_L18p"/>
    <property type="match status" value="1"/>
</dbReference>
<dbReference type="SUPFAM" id="SSF53137">
    <property type="entry name" value="Translational machinery components"/>
    <property type="match status" value="1"/>
</dbReference>
<protein>
    <recommendedName>
        <fullName evidence="1">Large ribosomal subunit protein uL18</fullName>
    </recommendedName>
    <alternativeName>
        <fullName evidence="3">50S ribosomal protein L18</fullName>
    </alternativeName>
</protein>
<evidence type="ECO:0000255" key="1">
    <source>
        <dbReference type="HAMAP-Rule" id="MF_01337"/>
    </source>
</evidence>
<evidence type="ECO:0000256" key="2">
    <source>
        <dbReference type="SAM" id="MobiDB-lite"/>
    </source>
</evidence>
<evidence type="ECO:0000305" key="3"/>
<keyword id="KW-0687">Ribonucleoprotein</keyword>
<keyword id="KW-0689">Ribosomal protein</keyword>
<keyword id="KW-0694">RNA-binding</keyword>
<keyword id="KW-0699">rRNA-binding</keyword>
<reference key="1">
    <citation type="journal article" date="2005" name="Proc. Natl. Acad. Sci. U.S.A.">
        <title>Genome analysis of multiple pathogenic isolates of Streptococcus agalactiae: implications for the microbial 'pan-genome'.</title>
        <authorList>
            <person name="Tettelin H."/>
            <person name="Masignani V."/>
            <person name="Cieslewicz M.J."/>
            <person name="Donati C."/>
            <person name="Medini D."/>
            <person name="Ward N.L."/>
            <person name="Angiuoli S.V."/>
            <person name="Crabtree J."/>
            <person name="Jones A.L."/>
            <person name="Durkin A.S."/>
            <person name="DeBoy R.T."/>
            <person name="Davidsen T.M."/>
            <person name="Mora M."/>
            <person name="Scarselli M."/>
            <person name="Margarit y Ros I."/>
            <person name="Peterson J.D."/>
            <person name="Hauser C.R."/>
            <person name="Sundaram J.P."/>
            <person name="Nelson W.C."/>
            <person name="Madupu R."/>
            <person name="Brinkac L.M."/>
            <person name="Dodson R.J."/>
            <person name="Rosovitz M.J."/>
            <person name="Sullivan S.A."/>
            <person name="Daugherty S.C."/>
            <person name="Haft D.H."/>
            <person name="Selengut J."/>
            <person name="Gwinn M.L."/>
            <person name="Zhou L."/>
            <person name="Zafar N."/>
            <person name="Khouri H."/>
            <person name="Radune D."/>
            <person name="Dimitrov G."/>
            <person name="Watkins K."/>
            <person name="O'Connor K.J."/>
            <person name="Smith S."/>
            <person name="Utterback T.R."/>
            <person name="White O."/>
            <person name="Rubens C.E."/>
            <person name="Grandi G."/>
            <person name="Madoff L.C."/>
            <person name="Kasper D.L."/>
            <person name="Telford J.L."/>
            <person name="Wessels M.R."/>
            <person name="Rappuoli R."/>
            <person name="Fraser C.M."/>
        </authorList>
    </citation>
    <scope>NUCLEOTIDE SEQUENCE [LARGE SCALE GENOMIC DNA]</scope>
    <source>
        <strain>ATCC 27591 / A909 / CDC SS700</strain>
    </source>
</reference>
<accession>Q3K3V3</accession>
<comment type="function">
    <text evidence="1">This is one of the proteins that bind and probably mediate the attachment of the 5S RNA into the large ribosomal subunit, where it forms part of the central protuberance.</text>
</comment>
<comment type="subunit">
    <text evidence="1">Part of the 50S ribosomal subunit; part of the 5S rRNA/L5/L18/L25 subcomplex. Contacts the 5S and 23S rRNAs.</text>
</comment>
<comment type="similarity">
    <text evidence="1">Belongs to the universal ribosomal protein uL18 family.</text>
</comment>
<gene>
    <name evidence="1" type="primary">rplR</name>
    <name type="ordered locus">SAK_0107</name>
</gene>
<name>RL18_STRA1</name>
<sequence>MISKPDKNKIRQKRHRRVRGKLSGTADRPRLNIFRSNTGIYAQVIDDVAGVTLASASTLDKEVSNGTKTEQAVVVGKLVAERAVAKGISEVVFDRGGYLYHGRVKALADSARENGLKF</sequence>
<organism>
    <name type="scientific">Streptococcus agalactiae serotype Ia (strain ATCC 27591 / A909 / CDC SS700)</name>
    <dbReference type="NCBI Taxonomy" id="205921"/>
    <lineage>
        <taxon>Bacteria</taxon>
        <taxon>Bacillati</taxon>
        <taxon>Bacillota</taxon>
        <taxon>Bacilli</taxon>
        <taxon>Lactobacillales</taxon>
        <taxon>Streptococcaceae</taxon>
        <taxon>Streptococcus</taxon>
    </lineage>
</organism>
<proteinExistence type="inferred from homology"/>